<proteinExistence type="inferred from homology"/>
<organism>
    <name type="scientific">Staphylococcus haemolyticus (strain JCSC1435)</name>
    <dbReference type="NCBI Taxonomy" id="279808"/>
    <lineage>
        <taxon>Bacteria</taxon>
        <taxon>Bacillati</taxon>
        <taxon>Bacillota</taxon>
        <taxon>Bacilli</taxon>
        <taxon>Bacillales</taxon>
        <taxon>Staphylococcaceae</taxon>
        <taxon>Staphylococcus</taxon>
    </lineage>
</organism>
<sequence>MERTFLMIKPDAIQRNLVGEIISRIERKGLKLVGAKLMTVPQALAEEHYSEHTDKPFYGKLISFITSAPVFAMVVEGEDAVDVSRHIIGKTNPSEATPGSIRGDLGLTVGRNVIHGSDSVESAQREINLWFKEEELSSYEAPRDTWLYE</sequence>
<gene>
    <name evidence="1" type="primary">ndk</name>
    <name type="ordered locus">SH1445</name>
</gene>
<feature type="chain" id="PRO_0000226581" description="Nucleoside diphosphate kinase">
    <location>
        <begin position="1"/>
        <end position="149"/>
    </location>
</feature>
<feature type="active site" description="Pros-phosphohistidine intermediate" evidence="1">
    <location>
        <position position="115"/>
    </location>
</feature>
<feature type="binding site" evidence="1">
    <location>
        <position position="9"/>
    </location>
    <ligand>
        <name>ATP</name>
        <dbReference type="ChEBI" id="CHEBI:30616"/>
    </ligand>
</feature>
<feature type="binding site" evidence="1">
    <location>
        <position position="57"/>
    </location>
    <ligand>
        <name>ATP</name>
        <dbReference type="ChEBI" id="CHEBI:30616"/>
    </ligand>
</feature>
<feature type="binding site" evidence="1">
    <location>
        <position position="85"/>
    </location>
    <ligand>
        <name>ATP</name>
        <dbReference type="ChEBI" id="CHEBI:30616"/>
    </ligand>
</feature>
<feature type="binding site" evidence="1">
    <location>
        <position position="91"/>
    </location>
    <ligand>
        <name>ATP</name>
        <dbReference type="ChEBI" id="CHEBI:30616"/>
    </ligand>
</feature>
<feature type="binding site" evidence="1">
    <location>
        <position position="102"/>
    </location>
    <ligand>
        <name>ATP</name>
        <dbReference type="ChEBI" id="CHEBI:30616"/>
    </ligand>
</feature>
<feature type="binding site" evidence="1">
    <location>
        <position position="112"/>
    </location>
    <ligand>
        <name>ATP</name>
        <dbReference type="ChEBI" id="CHEBI:30616"/>
    </ligand>
</feature>
<keyword id="KW-0067">ATP-binding</keyword>
<keyword id="KW-0963">Cytoplasm</keyword>
<keyword id="KW-0418">Kinase</keyword>
<keyword id="KW-0460">Magnesium</keyword>
<keyword id="KW-0479">Metal-binding</keyword>
<keyword id="KW-0546">Nucleotide metabolism</keyword>
<keyword id="KW-0547">Nucleotide-binding</keyword>
<keyword id="KW-0597">Phosphoprotein</keyword>
<keyword id="KW-0808">Transferase</keyword>
<name>NDK_STAHJ</name>
<comment type="function">
    <text evidence="1">Major role in the synthesis of nucleoside triphosphates other than ATP. The ATP gamma phosphate is transferred to the NDP beta phosphate via a ping-pong mechanism, using a phosphorylated active-site intermediate.</text>
</comment>
<comment type="catalytic activity">
    <reaction evidence="1">
        <text>a 2'-deoxyribonucleoside 5'-diphosphate + ATP = a 2'-deoxyribonucleoside 5'-triphosphate + ADP</text>
        <dbReference type="Rhea" id="RHEA:44640"/>
        <dbReference type="ChEBI" id="CHEBI:30616"/>
        <dbReference type="ChEBI" id="CHEBI:61560"/>
        <dbReference type="ChEBI" id="CHEBI:73316"/>
        <dbReference type="ChEBI" id="CHEBI:456216"/>
        <dbReference type="EC" id="2.7.4.6"/>
    </reaction>
</comment>
<comment type="catalytic activity">
    <reaction evidence="1">
        <text>a ribonucleoside 5'-diphosphate + ATP = a ribonucleoside 5'-triphosphate + ADP</text>
        <dbReference type="Rhea" id="RHEA:18113"/>
        <dbReference type="ChEBI" id="CHEBI:30616"/>
        <dbReference type="ChEBI" id="CHEBI:57930"/>
        <dbReference type="ChEBI" id="CHEBI:61557"/>
        <dbReference type="ChEBI" id="CHEBI:456216"/>
        <dbReference type="EC" id="2.7.4.6"/>
    </reaction>
</comment>
<comment type="cofactor">
    <cofactor evidence="1">
        <name>Mg(2+)</name>
        <dbReference type="ChEBI" id="CHEBI:18420"/>
    </cofactor>
</comment>
<comment type="subunit">
    <text evidence="1">Homotetramer.</text>
</comment>
<comment type="subcellular location">
    <subcellularLocation>
        <location evidence="1">Cytoplasm</location>
    </subcellularLocation>
</comment>
<comment type="similarity">
    <text evidence="1">Belongs to the NDK family.</text>
</comment>
<reference key="1">
    <citation type="journal article" date="2005" name="J. Bacteriol.">
        <title>Whole-genome sequencing of Staphylococcus haemolyticus uncovers the extreme plasticity of its genome and the evolution of human-colonizing staphylococcal species.</title>
        <authorList>
            <person name="Takeuchi F."/>
            <person name="Watanabe S."/>
            <person name="Baba T."/>
            <person name="Yuzawa H."/>
            <person name="Ito T."/>
            <person name="Morimoto Y."/>
            <person name="Kuroda M."/>
            <person name="Cui L."/>
            <person name="Takahashi M."/>
            <person name="Ankai A."/>
            <person name="Baba S."/>
            <person name="Fukui S."/>
            <person name="Lee J.C."/>
            <person name="Hiramatsu K."/>
        </authorList>
    </citation>
    <scope>NUCLEOTIDE SEQUENCE [LARGE SCALE GENOMIC DNA]</scope>
    <source>
        <strain>JCSC1435</strain>
    </source>
</reference>
<protein>
    <recommendedName>
        <fullName evidence="1">Nucleoside diphosphate kinase</fullName>
        <shortName evidence="1">NDK</shortName>
        <shortName evidence="1">NDP kinase</shortName>
        <ecNumber evidence="1">2.7.4.6</ecNumber>
    </recommendedName>
    <alternativeName>
        <fullName evidence="1">Nucleoside-2-P kinase</fullName>
    </alternativeName>
</protein>
<evidence type="ECO:0000255" key="1">
    <source>
        <dbReference type="HAMAP-Rule" id="MF_00451"/>
    </source>
</evidence>
<accession>Q4L6H1</accession>
<dbReference type="EC" id="2.7.4.6" evidence="1"/>
<dbReference type="EMBL" id="AP006716">
    <property type="protein sequence ID" value="BAE04754.1"/>
    <property type="molecule type" value="Genomic_DNA"/>
</dbReference>
<dbReference type="RefSeq" id="WP_011275740.1">
    <property type="nucleotide sequence ID" value="NC_007168.1"/>
</dbReference>
<dbReference type="SMR" id="Q4L6H1"/>
<dbReference type="KEGG" id="sha:SH1445"/>
<dbReference type="eggNOG" id="COG0105">
    <property type="taxonomic scope" value="Bacteria"/>
</dbReference>
<dbReference type="HOGENOM" id="CLU_060216_6_3_9"/>
<dbReference type="OrthoDB" id="9801161at2"/>
<dbReference type="Proteomes" id="UP000000543">
    <property type="component" value="Chromosome"/>
</dbReference>
<dbReference type="GO" id="GO:0005737">
    <property type="term" value="C:cytoplasm"/>
    <property type="evidence" value="ECO:0007669"/>
    <property type="project" value="UniProtKB-SubCell"/>
</dbReference>
<dbReference type="GO" id="GO:0005524">
    <property type="term" value="F:ATP binding"/>
    <property type="evidence" value="ECO:0007669"/>
    <property type="project" value="UniProtKB-UniRule"/>
</dbReference>
<dbReference type="GO" id="GO:0046872">
    <property type="term" value="F:metal ion binding"/>
    <property type="evidence" value="ECO:0007669"/>
    <property type="project" value="UniProtKB-KW"/>
</dbReference>
<dbReference type="GO" id="GO:0004550">
    <property type="term" value="F:nucleoside diphosphate kinase activity"/>
    <property type="evidence" value="ECO:0007669"/>
    <property type="project" value="UniProtKB-UniRule"/>
</dbReference>
<dbReference type="GO" id="GO:0006241">
    <property type="term" value="P:CTP biosynthetic process"/>
    <property type="evidence" value="ECO:0007669"/>
    <property type="project" value="UniProtKB-UniRule"/>
</dbReference>
<dbReference type="GO" id="GO:0006183">
    <property type="term" value="P:GTP biosynthetic process"/>
    <property type="evidence" value="ECO:0007669"/>
    <property type="project" value="UniProtKB-UniRule"/>
</dbReference>
<dbReference type="GO" id="GO:0006228">
    <property type="term" value="P:UTP biosynthetic process"/>
    <property type="evidence" value="ECO:0007669"/>
    <property type="project" value="UniProtKB-UniRule"/>
</dbReference>
<dbReference type="CDD" id="cd04413">
    <property type="entry name" value="NDPk_I"/>
    <property type="match status" value="1"/>
</dbReference>
<dbReference type="FunFam" id="3.30.70.141:FF:000002">
    <property type="entry name" value="Nucleoside diphosphate kinase"/>
    <property type="match status" value="1"/>
</dbReference>
<dbReference type="Gene3D" id="3.30.70.141">
    <property type="entry name" value="Nucleoside diphosphate kinase-like domain"/>
    <property type="match status" value="1"/>
</dbReference>
<dbReference type="HAMAP" id="MF_00451">
    <property type="entry name" value="NDP_kinase"/>
    <property type="match status" value="1"/>
</dbReference>
<dbReference type="InterPro" id="IPR034907">
    <property type="entry name" value="NDK-like_dom"/>
</dbReference>
<dbReference type="InterPro" id="IPR036850">
    <property type="entry name" value="NDK-like_dom_sf"/>
</dbReference>
<dbReference type="InterPro" id="IPR001564">
    <property type="entry name" value="Nucleoside_diP_kinase"/>
</dbReference>
<dbReference type="InterPro" id="IPR023005">
    <property type="entry name" value="Nucleoside_diP_kinase_AS"/>
</dbReference>
<dbReference type="NCBIfam" id="NF001908">
    <property type="entry name" value="PRK00668.1"/>
    <property type="match status" value="1"/>
</dbReference>
<dbReference type="PANTHER" id="PTHR11349">
    <property type="entry name" value="NUCLEOSIDE DIPHOSPHATE KINASE"/>
    <property type="match status" value="1"/>
</dbReference>
<dbReference type="Pfam" id="PF00334">
    <property type="entry name" value="NDK"/>
    <property type="match status" value="1"/>
</dbReference>
<dbReference type="PRINTS" id="PR01243">
    <property type="entry name" value="NUCDPKINASE"/>
</dbReference>
<dbReference type="SMART" id="SM00562">
    <property type="entry name" value="NDK"/>
    <property type="match status" value="1"/>
</dbReference>
<dbReference type="SUPFAM" id="SSF54919">
    <property type="entry name" value="Nucleoside diphosphate kinase, NDK"/>
    <property type="match status" value="1"/>
</dbReference>
<dbReference type="PROSITE" id="PS00469">
    <property type="entry name" value="NDPK"/>
    <property type="match status" value="1"/>
</dbReference>
<dbReference type="PROSITE" id="PS51374">
    <property type="entry name" value="NDPK_LIKE"/>
    <property type="match status" value="1"/>
</dbReference>